<organism>
    <name type="scientific">Pisum sativum</name>
    <name type="common">Garden pea</name>
    <name type="synonym">Lathyrus oleraceus</name>
    <dbReference type="NCBI Taxonomy" id="3888"/>
    <lineage>
        <taxon>Eukaryota</taxon>
        <taxon>Viridiplantae</taxon>
        <taxon>Streptophyta</taxon>
        <taxon>Embryophyta</taxon>
        <taxon>Tracheophyta</taxon>
        <taxon>Spermatophyta</taxon>
        <taxon>Magnoliopsida</taxon>
        <taxon>eudicotyledons</taxon>
        <taxon>Gunneridae</taxon>
        <taxon>Pentapetalae</taxon>
        <taxon>rosids</taxon>
        <taxon>fabids</taxon>
        <taxon>Fabales</taxon>
        <taxon>Fabaceae</taxon>
        <taxon>Papilionoideae</taxon>
        <taxon>50 kb inversion clade</taxon>
        <taxon>NPAAA clade</taxon>
        <taxon>Hologalegina</taxon>
        <taxon>IRL clade</taxon>
        <taxon>Fabeae</taxon>
        <taxon>Pisum</taxon>
    </lineage>
</organism>
<name>CEMA_PEA</name>
<geneLocation type="chloroplast"/>
<accession>P20150</accession>
<proteinExistence type="inferred from homology"/>
<sequence>MAKKKAFIPLLCLTSIVFLPWCISFTFKKSLESWITHWYNTKESEIFLNTIQEKSILKKFLEFEELFLLDEMLKEYPETRLQNLRIEIYKETIQLIQTNNQDHIHTILHFCTNIICFLILSVYSIRGNQELIILNSWVQEFLYNLSDTIKAFSILFLIEFCVGYHSTGGWELMIGSVYKDFGFIPNDHIISFLVSILPAILDTIFKYWIFRYLNRVSPSLVLIYDSIPFQE</sequence>
<evidence type="ECO:0000255" key="1">
    <source>
        <dbReference type="HAMAP-Rule" id="MF_01308"/>
    </source>
</evidence>
<evidence type="ECO:0000269" key="2">
    <source>
    </source>
</evidence>
<evidence type="ECO:0000303" key="3">
    <source>
    </source>
</evidence>
<evidence type="ECO:0000305" key="4"/>
<keyword id="KW-0050">Antiport</keyword>
<keyword id="KW-0150">Chloroplast</keyword>
<keyword id="KW-0375">Hydrogen ion transport</keyword>
<keyword id="KW-0406">Ion transport</keyword>
<keyword id="KW-0472">Membrane</keyword>
<keyword id="KW-0934">Plastid</keyword>
<keyword id="KW-1001">Plastid inner membrane</keyword>
<keyword id="KW-0630">Potassium</keyword>
<keyword id="KW-0633">Potassium transport</keyword>
<keyword id="KW-0812">Transmembrane</keyword>
<keyword id="KW-1133">Transmembrane helix</keyword>
<keyword id="KW-0813">Transport</keyword>
<feature type="chain" id="PRO_0000216655" description="Potassium/proton antiporter CemA">
    <location>
        <begin position="1"/>
        <end position="231"/>
    </location>
</feature>
<feature type="transmembrane region" description="Helical" evidence="1">
    <location>
        <begin position="7"/>
        <end position="27"/>
    </location>
</feature>
<feature type="transmembrane region" description="Helical" evidence="1">
    <location>
        <begin position="104"/>
        <end position="124"/>
    </location>
</feature>
<feature type="transmembrane region" description="Helical" evidence="1">
    <location>
        <begin position="154"/>
        <end position="174"/>
    </location>
</feature>
<feature type="transmembrane region" description="Helical" evidence="1">
    <location>
        <begin position="189"/>
        <end position="209"/>
    </location>
</feature>
<comment type="function">
    <text evidence="1">Contributes to K(+)/H(+) antiport activity by supporting proton efflux to control proton extrusion and homeostasis in chloroplasts in a light-dependent manner to modulate photosynthesis. Prevents excessive induction of non-photochemical quenching (NPQ) under continuous-light conditions. Indirectly promotes efficient inorganic carbon uptake into chloroplasts.</text>
</comment>
<comment type="catalytic activity">
    <reaction evidence="1">
        <text>K(+)(in) + H(+)(out) = K(+)(out) + H(+)(in)</text>
        <dbReference type="Rhea" id="RHEA:29467"/>
        <dbReference type="ChEBI" id="CHEBI:15378"/>
        <dbReference type="ChEBI" id="CHEBI:29103"/>
    </reaction>
</comment>
<comment type="subcellular location">
    <subcellularLocation>
        <location evidence="1 2">Plastid</location>
        <location evidence="1 2">Chloroplast inner membrane</location>
        <topology evidence="1">Multi-pass membrane protein</topology>
    </subcellularLocation>
</comment>
<comment type="similarity">
    <text evidence="1 4">Belongs to the CemA family.</text>
</comment>
<reference key="1">
    <citation type="journal article" date="1990" name="Plant Mol. Biol.">
        <title>An open reading frame encoding a putative haem-binding polypeptide is cotranscribed with the pea chloroplast gene for apocytochrome f.</title>
        <authorList>
            <person name="Willey D.L."/>
            <person name="Gray J.C."/>
        </authorList>
    </citation>
    <scope>NUCLEOTIDE SEQUENCE [GENOMIC DNA]</scope>
</reference>
<reference key="2">
    <citation type="journal article" date="1991" name="Curr. Genet.">
        <title>Sequence and transcriptional analysis of the gene cluster trnQ-zfpA-psaI-ORF231-petA in pea chloroplasts.</title>
        <authorList>
            <person name="Nagano Y."/>
            <person name="Matsuno R."/>
            <person name="Sasaki Y."/>
        </authorList>
    </citation>
    <scope>NUCLEOTIDE SEQUENCE [GENOMIC DNA]</scope>
    <source>
        <strain>cv. Alaska</strain>
    </source>
</reference>
<reference key="3">
    <citation type="journal article" date="1991" name="Curr. Genet.">
        <title>Pea chloroplast genes encoding a 4 kDa polypeptide of photosystem I and a putative enzyme of C1 metabolism.</title>
        <authorList>
            <person name="Smith A.G."/>
            <person name="Wilson R.J."/>
            <person name="Kaethner T.M."/>
            <person name="Willey D.L."/>
            <person name="Gray J.C."/>
        </authorList>
    </citation>
    <scope>NUCLEOTIDE SEQUENCE [GENOMIC DNA] OF 1-18</scope>
    <source>
        <strain>cv. Alaska</strain>
    </source>
</reference>
<reference key="4">
    <citation type="journal article" date="1993" name="FEBS Lett.">
        <title>Chloroplast envelope protein encoded by chloroplast genome.</title>
        <authorList>
            <person name="Sasaki Y."/>
            <person name="Sekiguchi K."/>
            <person name="Nagano Y."/>
            <person name="Matsuno R."/>
        </authorList>
    </citation>
    <scope>SUBCELLULAR LOCATION</scope>
</reference>
<gene>
    <name evidence="1 3" type="primary">cemA</name>
    <name type="synonym">hbp</name>
    <name type="synonym">ycf10</name>
</gene>
<protein>
    <recommendedName>
        <fullName evidence="1">Potassium/proton antiporter CemA</fullName>
    </recommendedName>
    <alternativeName>
        <fullName evidence="1 3">Chloroplast envelope membrane protein A</fullName>
        <shortName evidence="1 3">CemA</shortName>
    </alternativeName>
</protein>
<dbReference type="EMBL" id="X53525">
    <property type="protein sequence ID" value="CAA37602.1"/>
    <property type="molecule type" value="Genomic_DNA"/>
</dbReference>
<dbReference type="EMBL" id="X56315">
    <property type="protein sequence ID" value="CAA39758.1"/>
    <property type="molecule type" value="Genomic_DNA"/>
</dbReference>
<dbReference type="EMBL" id="X54750">
    <property type="protein sequence ID" value="CAA38549.1"/>
    <property type="molecule type" value="Genomic_DNA"/>
</dbReference>
<dbReference type="PIR" id="S12124">
    <property type="entry name" value="S12124"/>
</dbReference>
<dbReference type="RefSeq" id="YP_003587556.1">
    <property type="nucleotide sequence ID" value="NC_014057.1"/>
</dbReference>
<dbReference type="SMR" id="P20150"/>
<dbReference type="GeneID" id="9073104"/>
<dbReference type="OrthoDB" id="1420651at2759"/>
<dbReference type="GO" id="GO:0009706">
    <property type="term" value="C:chloroplast inner membrane"/>
    <property type="evidence" value="ECO:0007669"/>
    <property type="project" value="UniProtKB-SubCell"/>
</dbReference>
<dbReference type="GO" id="GO:0015297">
    <property type="term" value="F:antiporter activity"/>
    <property type="evidence" value="ECO:0007669"/>
    <property type="project" value="UniProtKB-KW"/>
</dbReference>
<dbReference type="GO" id="GO:0015078">
    <property type="term" value="F:proton transmembrane transporter activity"/>
    <property type="evidence" value="ECO:0007669"/>
    <property type="project" value="UniProtKB-UniRule"/>
</dbReference>
<dbReference type="GO" id="GO:0006813">
    <property type="term" value="P:potassium ion transport"/>
    <property type="evidence" value="ECO:0007669"/>
    <property type="project" value="UniProtKB-UniRule"/>
</dbReference>
<dbReference type="HAMAP" id="MF_01308">
    <property type="entry name" value="CemA_PxcA"/>
    <property type="match status" value="1"/>
</dbReference>
<dbReference type="InterPro" id="IPR004282">
    <property type="entry name" value="CemA"/>
</dbReference>
<dbReference type="PANTHER" id="PTHR33650:SF2">
    <property type="entry name" value="CHLOROPLAST ENVELOPE MEMBRANE PROTEIN"/>
    <property type="match status" value="1"/>
</dbReference>
<dbReference type="PANTHER" id="PTHR33650">
    <property type="entry name" value="CHLOROPLAST ENVELOPE MEMBRANE PROTEIN-RELATED"/>
    <property type="match status" value="1"/>
</dbReference>
<dbReference type="Pfam" id="PF03040">
    <property type="entry name" value="CemA"/>
    <property type="match status" value="1"/>
</dbReference>